<gene>
    <name type="primary">EIF2B4</name>
    <name type="synonym">EIF2BD</name>
</gene>
<evidence type="ECO:0000250" key="1">
    <source>
        <dbReference type="UniProtKB" id="Q09924"/>
    </source>
</evidence>
<evidence type="ECO:0000256" key="2">
    <source>
        <dbReference type="SAM" id="MobiDB-lite"/>
    </source>
</evidence>
<evidence type="ECO:0000269" key="3">
    <source>
    </source>
</evidence>
<evidence type="ECO:0000269" key="4">
    <source>
    </source>
</evidence>
<evidence type="ECO:0000269" key="5">
    <source>
    </source>
</evidence>
<evidence type="ECO:0000269" key="6">
    <source>
    </source>
</evidence>
<evidence type="ECO:0000269" key="7">
    <source>
    </source>
</evidence>
<evidence type="ECO:0000269" key="8">
    <source>
    </source>
</evidence>
<evidence type="ECO:0000303" key="9">
    <source ref="2"/>
</evidence>
<evidence type="ECO:0000305" key="10"/>
<evidence type="ECO:0000305" key="11">
    <source>
    </source>
</evidence>
<evidence type="ECO:0007744" key="12">
    <source>
        <dbReference type="PDB" id="6K71"/>
    </source>
</evidence>
<evidence type="ECO:0007744" key="13">
    <source>
        <dbReference type="PDB" id="6K72"/>
    </source>
</evidence>
<evidence type="ECO:0007744" key="14">
    <source>
    </source>
</evidence>
<evidence type="ECO:0007744" key="15">
    <source>
    </source>
</evidence>
<evidence type="ECO:0007744" key="16">
    <source>
    </source>
</evidence>
<evidence type="ECO:0007744" key="17">
    <source>
    </source>
</evidence>
<evidence type="ECO:0007744" key="18">
    <source>
    </source>
</evidence>
<evidence type="ECO:0007829" key="19">
    <source>
        <dbReference type="PDB" id="6CAJ"/>
    </source>
</evidence>
<evidence type="ECO:0007829" key="20">
    <source>
        <dbReference type="PDB" id="7F66"/>
    </source>
</evidence>
<evidence type="ECO:0007829" key="21">
    <source>
        <dbReference type="PDB" id="7RLO"/>
    </source>
</evidence>
<evidence type="ECO:0007829" key="22">
    <source>
        <dbReference type="PDB" id="7VLK"/>
    </source>
</evidence>
<protein>
    <recommendedName>
        <fullName>Translation initiation factor eIF2B subunit delta</fullName>
    </recommendedName>
    <alternativeName>
        <fullName>eIF2B GDP-GTP exchange factor subunit delta</fullName>
    </alternativeName>
</protein>
<comment type="function">
    <text evidence="6 7 8">Acts as a component of the translation initiation factor 2B (eIF2B) complex, which catalyzes the exchange of GDP for GTP on eukaryotic initiation factor 2 (eIF2) gamma subunit (PubMed:25858979, PubMed:27023709, PubMed:31048492). Its guanine nucleotide exchange factor activity is repressed when bound to eIF2 complex phosphorylated on the alpha subunit, thereby limiting the amount of methionyl-initiator methionine tRNA available to the ribosome and consequently global translation is repressed (PubMed:25858979, PubMed:31048492).</text>
</comment>
<comment type="activity regulation">
    <text evidence="6">Activated by the chemical integrated stress response (ISR) inhibitor ISRIB which stimulates guanine nucleotide exchange factor activity for both phosphorylated and unphosphorylated eIF2.</text>
</comment>
<comment type="subunit">
    <text evidence="6 7 8">Component of the translation initiation factor 2B (eIF2B) complex which is a heterodecamer of two sets of five different subunits: alpha, beta, gamma, delta and epsilon. Subunits alpha, beta and delta comprise a regulatory subcomplex and subunits epsilon and gamma comprise a catalytic subcomplex (PubMed:25858979, PubMed:27023709, PubMed:31048492). Within the complex, the hexameric regulatory complex resides at the center, with the two heterodimeric catalytic subcomplexes bound on opposite sides (PubMed:31048492).</text>
</comment>
<comment type="interaction">
    <interactant intactId="EBI-2340132">
        <id>Q9UI10</id>
    </interactant>
    <interactant intactId="EBI-751728">
        <id>P01019</id>
        <label>AGT</label>
    </interactant>
    <organismsDiffer>false</organismsDiffer>
    <experiments>3</experiments>
</comment>
<comment type="interaction">
    <interactant intactId="EBI-2340132">
        <id>Q9UI10</id>
    </interactant>
    <interactant intactId="EBI-718773">
        <id>P49770</id>
        <label>EIF2B2</label>
    </interactant>
    <organismsDiffer>false</organismsDiffer>
    <experiments>9</experiments>
</comment>
<comment type="interaction">
    <interactant intactId="EBI-2340132">
        <id>Q9UI10</id>
    </interactant>
    <interactant intactId="EBI-10288660">
        <id>Q53XC2</id>
        <label>EIF2B2</label>
    </interactant>
    <organismsDiffer>false</organismsDiffer>
    <experiments>4</experiments>
</comment>
<comment type="interaction">
    <interactant intactId="EBI-2340132">
        <id>Q9UI10</id>
    </interactant>
    <interactant intactId="EBI-852851">
        <id>P01100</id>
        <label>FOS</label>
    </interactant>
    <organismsDiffer>false</organismsDiffer>
    <experiments>3</experiments>
</comment>
<comment type="interaction">
    <interactant intactId="EBI-2340132">
        <id>Q9UI10</id>
    </interactant>
    <interactant intactId="EBI-2552594">
        <id>P50440</id>
        <label>GATM</label>
    </interactant>
    <organismsDiffer>false</organismsDiffer>
    <experiments>3</experiments>
</comment>
<comment type="interaction">
    <interactant intactId="EBI-2340132">
        <id>Q9UI10</id>
    </interactant>
    <interactant intactId="EBI-401755">
        <id>P62993</id>
        <label>GRB2</label>
    </interactant>
    <organismsDiffer>false</organismsDiffer>
    <experiments>3</experiments>
</comment>
<comment type="interaction">
    <interactant intactId="EBI-2340132">
        <id>Q9UI10</id>
    </interactant>
    <interactant intactId="EBI-10087153">
        <id>P03952</id>
        <label>KLKB1</label>
    </interactant>
    <organismsDiffer>false</organismsDiffer>
    <experiments>3</experiments>
</comment>
<comment type="interaction">
    <interactant intactId="EBI-2340132">
        <id>Q9UI10</id>
    </interactant>
    <interactant intactId="EBI-715909">
        <id>P06858</id>
        <label>LPL</label>
    </interactant>
    <organismsDiffer>false</organismsDiffer>
    <experiments>3</experiments>
</comment>
<comment type="interaction">
    <interactant intactId="EBI-2340132">
        <id>Q9UI10</id>
    </interactant>
    <interactant intactId="EBI-1052596">
        <id>P31930</id>
        <label>UQCRC1</label>
    </interactant>
    <organismsDiffer>false</organismsDiffer>
    <experiments>3</experiments>
</comment>
<comment type="interaction">
    <interactant intactId="EBI-2340132">
        <id>Q9UI10</id>
    </interactant>
    <interactant intactId="EBI-12157263">
        <id>P40337-2</id>
        <label>VHL</label>
    </interactant>
    <organismsDiffer>false</organismsDiffer>
    <experiments>3</experiments>
</comment>
<comment type="interaction">
    <interactant intactId="EBI-2340132">
        <id>Q9UI10</id>
    </interactant>
    <interactant intactId="EBI-2547404">
        <id>P06821</id>
        <label>M</label>
    </interactant>
    <organismsDiffer>true</organismsDiffer>
    <experiments>3</experiments>
</comment>
<comment type="interaction">
    <interactant intactId="EBI-2340132">
        <id>Q9UI10</id>
    </interactant>
    <interactant intactId="EBI-12562156">
        <id>Q6DPW5</id>
        <label>M</label>
    </interactant>
    <organismsDiffer>true</organismsDiffer>
    <experiments>2</experiments>
</comment>
<comment type="interaction">
    <interactant intactId="EBI-2340132">
        <id>Q9UI10</id>
    </interactant>
    <interactant intactId="EBI-12562139">
        <id>C5E519</id>
        <label>M2</label>
    </interactant>
    <organismsDiffer>true</organismsDiffer>
    <experiments>2</experiments>
</comment>
<comment type="interaction">
    <interactant intactId="EBI-2340132">
        <id>Q9UI10</id>
    </interactant>
    <interactant intactId="EBI-12576433">
        <id>Q20MH8</id>
        <label>M2</label>
    </interactant>
    <organismsDiffer>true</organismsDiffer>
    <experiments>3</experiments>
</comment>
<comment type="subcellular location">
    <subcellularLocation>
        <location evidence="1">Cytoplasm</location>
        <location evidence="1">Cytosol</location>
    </subcellularLocation>
</comment>
<comment type="alternative products">
    <event type="alternative splicing"/>
    <isoform>
        <id>Q9UI10-1</id>
        <name>1</name>
        <sequence type="displayed"/>
    </isoform>
    <isoform>
        <id>Q9UI10-2</id>
        <name>2</name>
        <sequence type="described" ref="VSP_001433 VSP_040130"/>
    </isoform>
    <isoform>
        <id>Q9UI10-3</id>
        <name>3</name>
        <sequence type="described" ref="VSP_040130"/>
    </isoform>
</comment>
<comment type="disease" evidence="3 4 5">
    <disease id="DI-06650">
        <name>Leukoencephalopathy with vanishing white matter 4</name>
        <acronym>VWM4</acronym>
        <description>An autosomal recessive brain disease characterized by neurological features including progressive cerebellar ataxia, spasticity, and cognitive deficits. Brain imaging shows abnormal white matter that vanishes over time and is replaced by cerebrospinal fluid. Disease severity ranges from fatal infantile forms to adult forms without neurological deterioration. The disease is progressive with, in most individuals, additional episodes of rapid deterioration following febrile infections or minor head trauma. Death may occurs after a variable period after disease onset, usually following an episode of fever and coma. A subset of affected females with milder forms of the disease who survive to adolescence exhibit ovarian dysfunction. This variant of the disorder is called ovarioleukodystrophy.</description>
        <dbReference type="MIM" id="620314"/>
    </disease>
    <text>The disease is caused by variants affecting the gene represented in this entry.</text>
</comment>
<comment type="similarity">
    <text evidence="10">Belongs to the eIF-2B alpha/beta/delta subunits family.</text>
</comment>
<comment type="sequence caution" evidence="10">
    <conflict type="erroneous gene model prediction">
        <sequence resource="EMBL-CDS" id="CAB57305"/>
    </conflict>
</comment>
<comment type="online information" name="Mendelian genes eukaryotic translation initiation factor 2B, subunit 4 delta, 67kDa (EIF2B4)">
    <link uri="https://databases.lovd.nl/shared/genes/EIF2B4"/>
    <text>Leiden Open Variation Database (LOVD)</text>
</comment>
<dbReference type="EMBL" id="AF112207">
    <property type="protein sequence ID" value="AAF17195.1"/>
    <property type="molecule type" value="mRNA"/>
</dbReference>
<dbReference type="EMBL" id="AJ011305">
    <property type="protein sequence ID" value="CAB57260.1"/>
    <property type="molecule type" value="mRNA"/>
</dbReference>
<dbReference type="EMBL" id="AJ011306">
    <property type="protein sequence ID" value="CAB57261.1"/>
    <property type="molecule type" value="mRNA"/>
</dbReference>
<dbReference type="EMBL" id="AJ011307">
    <property type="protein sequence ID" value="CAB57304.1"/>
    <property type="molecule type" value="Genomic_DNA"/>
</dbReference>
<dbReference type="EMBL" id="AJ011308">
    <property type="protein sequence ID" value="CAB57304.1"/>
    <property type="status" value="JOINED"/>
    <property type="molecule type" value="Genomic_DNA"/>
</dbReference>
<dbReference type="EMBL" id="AJ011307">
    <property type="protein sequence ID" value="CAB57305.1"/>
    <property type="status" value="ALT_SEQ"/>
    <property type="molecule type" value="Genomic_DNA"/>
</dbReference>
<dbReference type="EMBL" id="AJ011308">
    <property type="protein sequence ID" value="CAB57305.1"/>
    <property type="status" value="JOINED"/>
    <property type="molecule type" value="Genomic_DNA"/>
</dbReference>
<dbReference type="EMBL" id="AC074117">
    <property type="protein sequence ID" value="AAY14843.1"/>
    <property type="molecule type" value="Genomic_DNA"/>
</dbReference>
<dbReference type="EMBL" id="CH471053">
    <property type="protein sequence ID" value="EAX00591.1"/>
    <property type="molecule type" value="Genomic_DNA"/>
</dbReference>
<dbReference type="EMBL" id="BC001870">
    <property type="protein sequence ID" value="AAH01870.1"/>
    <property type="molecule type" value="mRNA"/>
</dbReference>
<dbReference type="EMBL" id="BC091502">
    <property type="protein sequence ID" value="AAH91502.1"/>
    <property type="molecule type" value="mRNA"/>
</dbReference>
<dbReference type="CCDS" id="CCDS33164.1">
    <molecule id="Q9UI10-1"/>
</dbReference>
<dbReference type="CCDS" id="CCDS46244.1">
    <molecule id="Q9UI10-3"/>
</dbReference>
<dbReference type="CCDS" id="CCDS46245.1">
    <molecule id="Q9UI10-2"/>
</dbReference>
<dbReference type="RefSeq" id="NP_001029288.1">
    <molecule id="Q9UI10-1"/>
    <property type="nucleotide sequence ID" value="NM_001034116.2"/>
</dbReference>
<dbReference type="RefSeq" id="NP_001305894.1">
    <property type="nucleotide sequence ID" value="NM_001318965.1"/>
</dbReference>
<dbReference type="RefSeq" id="NP_001305895.1">
    <property type="nucleotide sequence ID" value="NM_001318966.1"/>
</dbReference>
<dbReference type="RefSeq" id="NP_001305896.1">
    <property type="nucleotide sequence ID" value="NM_001318967.1"/>
</dbReference>
<dbReference type="RefSeq" id="NP_001305897.1">
    <property type="nucleotide sequence ID" value="NM_001318968.1"/>
</dbReference>
<dbReference type="RefSeq" id="NP_056451.3">
    <molecule id="Q9UI10-3"/>
    <property type="nucleotide sequence ID" value="NM_015636.3"/>
</dbReference>
<dbReference type="RefSeq" id="NP_751945.2">
    <molecule id="Q9UI10-2"/>
    <property type="nucleotide sequence ID" value="NM_172195.4"/>
</dbReference>
<dbReference type="PDB" id="6CAJ">
    <property type="method" value="EM"/>
    <property type="resolution" value="2.80 A"/>
    <property type="chains" value="E/F=1-523"/>
</dbReference>
<dbReference type="PDB" id="6EZO">
    <property type="method" value="EM"/>
    <property type="resolution" value="4.10 A"/>
    <property type="chains" value="G/H=1-523"/>
</dbReference>
<dbReference type="PDB" id="6K71">
    <property type="method" value="EM"/>
    <property type="resolution" value="4.30 A"/>
    <property type="chains" value="G/H=1-523"/>
</dbReference>
<dbReference type="PDB" id="6K72">
    <property type="method" value="EM"/>
    <property type="resolution" value="4.60 A"/>
    <property type="chains" value="G/H=1-523"/>
</dbReference>
<dbReference type="PDB" id="6O81">
    <property type="method" value="EM"/>
    <property type="resolution" value="3.21 A"/>
    <property type="chains" value="E/F=1-523"/>
</dbReference>
<dbReference type="PDB" id="6O85">
    <property type="method" value="EM"/>
    <property type="resolution" value="3.03 A"/>
    <property type="chains" value="E/F=1-523"/>
</dbReference>
<dbReference type="PDB" id="6O9Z">
    <property type="method" value="EM"/>
    <property type="resolution" value="3.03 A"/>
    <property type="chains" value="E/F=1-523"/>
</dbReference>
<dbReference type="PDB" id="7D43">
    <property type="method" value="EM"/>
    <property type="resolution" value="4.30 A"/>
    <property type="chains" value="G/H=1-523"/>
</dbReference>
<dbReference type="PDB" id="7D44">
    <property type="method" value="EM"/>
    <property type="resolution" value="4.00 A"/>
    <property type="chains" value="G/H=1-523"/>
</dbReference>
<dbReference type="PDB" id="7D45">
    <property type="method" value="EM"/>
    <property type="resolution" value="3.80 A"/>
    <property type="chains" value="G/H=1-523"/>
</dbReference>
<dbReference type="PDB" id="7D46">
    <property type="method" value="EM"/>
    <property type="resolution" value="4.00 A"/>
    <property type="chains" value="G/H=1-523"/>
</dbReference>
<dbReference type="PDB" id="7F64">
    <property type="method" value="EM"/>
    <property type="resolution" value="2.42 A"/>
    <property type="chains" value="G/H=1-523"/>
</dbReference>
<dbReference type="PDB" id="7F66">
    <property type="method" value="EM"/>
    <property type="resolution" value="2.76 A"/>
    <property type="chains" value="G/H=1-523"/>
</dbReference>
<dbReference type="PDB" id="7F67">
    <property type="method" value="EM"/>
    <property type="resolution" value="3.59 A"/>
    <property type="chains" value="G/H=1-523"/>
</dbReference>
<dbReference type="PDB" id="7KMF">
    <property type="method" value="EM"/>
    <property type="resolution" value="2.91 A"/>
    <property type="chains" value="E/F=1-523"/>
</dbReference>
<dbReference type="PDB" id="7L70">
    <property type="method" value="EM"/>
    <property type="resolution" value="2.80 A"/>
    <property type="chains" value="E/F=1-523"/>
</dbReference>
<dbReference type="PDB" id="7L7G">
    <property type="method" value="EM"/>
    <property type="resolution" value="3.00 A"/>
    <property type="chains" value="E/F=1-523"/>
</dbReference>
<dbReference type="PDB" id="7RLO">
    <property type="method" value="EM"/>
    <property type="resolution" value="2.60 A"/>
    <property type="chains" value="E/F=1-523"/>
</dbReference>
<dbReference type="PDB" id="7TRJ">
    <property type="method" value="EM"/>
    <property type="resolution" value="2.80 A"/>
    <property type="chains" value="E/F=1-523"/>
</dbReference>
<dbReference type="PDB" id="7VLK">
    <property type="method" value="EM"/>
    <property type="resolution" value="2.27 A"/>
    <property type="chains" value="G/H=1-523"/>
</dbReference>
<dbReference type="PDB" id="8TQO">
    <property type="method" value="EM"/>
    <property type="resolution" value="3.10 A"/>
    <property type="chains" value="E=1-523"/>
</dbReference>
<dbReference type="PDB" id="8TQZ">
    <property type="method" value="EM"/>
    <property type="resolution" value="2.90 A"/>
    <property type="chains" value="E/F=1-523"/>
</dbReference>
<dbReference type="PDBsum" id="6CAJ"/>
<dbReference type="PDBsum" id="6EZO"/>
<dbReference type="PDBsum" id="6K71"/>
<dbReference type="PDBsum" id="6K72"/>
<dbReference type="PDBsum" id="6O81"/>
<dbReference type="PDBsum" id="6O85"/>
<dbReference type="PDBsum" id="6O9Z"/>
<dbReference type="PDBsum" id="7D43"/>
<dbReference type="PDBsum" id="7D44"/>
<dbReference type="PDBsum" id="7D45"/>
<dbReference type="PDBsum" id="7D46"/>
<dbReference type="PDBsum" id="7F64"/>
<dbReference type="PDBsum" id="7F66"/>
<dbReference type="PDBsum" id="7F67"/>
<dbReference type="PDBsum" id="7KMF"/>
<dbReference type="PDBsum" id="7L70"/>
<dbReference type="PDBsum" id="7L7G"/>
<dbReference type="PDBsum" id="7RLO"/>
<dbReference type="PDBsum" id="7TRJ"/>
<dbReference type="PDBsum" id="7VLK"/>
<dbReference type="PDBsum" id="8TQO"/>
<dbReference type="PDBsum" id="8TQZ"/>
<dbReference type="EMDB" id="EMD-0649"/>
<dbReference type="EMDB" id="EMD-0651"/>
<dbReference type="EMDB" id="EMD-0664"/>
<dbReference type="EMDB" id="EMD-22924"/>
<dbReference type="EMDB" id="EMD-23209"/>
<dbReference type="EMDB" id="EMD-24535"/>
<dbReference type="EMDB" id="EMD-26098"/>
<dbReference type="EMDB" id="EMD-30568"/>
<dbReference type="EMDB" id="EMD-30569"/>
<dbReference type="EMDB" id="EMD-30570"/>
<dbReference type="EMDB" id="EMD-30571"/>
<dbReference type="EMDB" id="EMD-31472"/>
<dbReference type="EMDB" id="EMD-31474"/>
<dbReference type="EMDB" id="EMD-31475"/>
<dbReference type="EMDB" id="EMD-32023"/>
<dbReference type="EMDB" id="EMD-41510"/>
<dbReference type="EMDB" id="EMD-41566"/>
<dbReference type="EMDB" id="EMD-4162"/>
<dbReference type="EMDB" id="EMD-7442"/>
<dbReference type="EMDB" id="EMD-9840"/>
<dbReference type="EMDB" id="EMD-9841"/>
<dbReference type="EMDB" id="EMD-9842"/>
<dbReference type="SMR" id="Q9UI10"/>
<dbReference type="BioGRID" id="114407">
    <property type="interactions" value="153"/>
</dbReference>
<dbReference type="ComplexPortal" id="CPX-8343">
    <property type="entry name" value="Eukaryotic translation initiation factor 2B complex"/>
</dbReference>
<dbReference type="CORUM" id="Q9UI10"/>
<dbReference type="FunCoup" id="Q9UI10">
    <property type="interactions" value="3234"/>
</dbReference>
<dbReference type="IntAct" id="Q9UI10">
    <property type="interactions" value="101"/>
</dbReference>
<dbReference type="MINT" id="Q9UI10"/>
<dbReference type="STRING" id="9606.ENSP00000429323"/>
<dbReference type="GlyGen" id="Q9UI10">
    <property type="glycosylation" value="2 sites, 1 O-linked glycan (1 site)"/>
</dbReference>
<dbReference type="iPTMnet" id="Q9UI10"/>
<dbReference type="PhosphoSitePlus" id="Q9UI10"/>
<dbReference type="SwissPalm" id="Q9UI10"/>
<dbReference type="BioMuta" id="EIF2B4"/>
<dbReference type="DMDM" id="28381357"/>
<dbReference type="jPOST" id="Q9UI10"/>
<dbReference type="MassIVE" id="Q9UI10"/>
<dbReference type="PaxDb" id="9606-ENSP00000394869"/>
<dbReference type="PeptideAtlas" id="Q9UI10"/>
<dbReference type="ProteomicsDB" id="84448">
    <molecule id="Q9UI10-1"/>
</dbReference>
<dbReference type="ProteomicsDB" id="84449">
    <molecule id="Q9UI10-2"/>
</dbReference>
<dbReference type="ProteomicsDB" id="84450">
    <molecule id="Q9UI10-3"/>
</dbReference>
<dbReference type="Pumba" id="Q9UI10"/>
<dbReference type="Antibodypedia" id="47347">
    <property type="antibodies" value="193 antibodies from 31 providers"/>
</dbReference>
<dbReference type="DNASU" id="8890"/>
<dbReference type="Ensembl" id="ENST00000347454.9">
    <molecule id="Q9UI10-1"/>
    <property type="protein sequence ID" value="ENSP00000233552.6"/>
    <property type="gene ID" value="ENSG00000115211.17"/>
</dbReference>
<dbReference type="Ensembl" id="ENST00000445933.6">
    <molecule id="Q9UI10-3"/>
    <property type="protein sequence ID" value="ENSP00000394397.2"/>
    <property type="gene ID" value="ENSG00000115211.17"/>
</dbReference>
<dbReference type="Ensembl" id="ENST00000451130.6">
    <molecule id="Q9UI10-2"/>
    <property type="protein sequence ID" value="ENSP00000394869.2"/>
    <property type="gene ID" value="ENSG00000115211.17"/>
</dbReference>
<dbReference type="GeneID" id="8890"/>
<dbReference type="KEGG" id="hsa:8890"/>
<dbReference type="MANE-Select" id="ENST00000347454.9">
    <property type="protein sequence ID" value="ENSP00000233552.6"/>
    <property type="RefSeq nucleotide sequence ID" value="NM_001034116.2"/>
    <property type="RefSeq protein sequence ID" value="NP_001029288.1"/>
</dbReference>
<dbReference type="UCSC" id="uc002rjz.4">
    <molecule id="Q9UI10-1"/>
    <property type="organism name" value="human"/>
</dbReference>
<dbReference type="AGR" id="HGNC:3260"/>
<dbReference type="CTD" id="8890"/>
<dbReference type="DisGeNET" id="8890"/>
<dbReference type="GeneCards" id="EIF2B4"/>
<dbReference type="GeneReviews" id="EIF2B4"/>
<dbReference type="HGNC" id="HGNC:3260">
    <property type="gene designation" value="EIF2B4"/>
</dbReference>
<dbReference type="HPA" id="ENSG00000115211">
    <property type="expression patterns" value="Low tissue specificity"/>
</dbReference>
<dbReference type="MalaCards" id="EIF2B4"/>
<dbReference type="MIM" id="606687">
    <property type="type" value="gene"/>
</dbReference>
<dbReference type="MIM" id="620314">
    <property type="type" value="phenotype"/>
</dbReference>
<dbReference type="neXtProt" id="NX_Q9UI10"/>
<dbReference type="OpenTargets" id="ENSG00000115211"/>
<dbReference type="Orphanet" id="157713">
    <property type="disease" value="Congenital or early infantile CACH syndrome"/>
</dbReference>
<dbReference type="Orphanet" id="99854">
    <property type="disease" value="Cree leukoencephalopathy"/>
</dbReference>
<dbReference type="Orphanet" id="157719">
    <property type="disease" value="Juvenile or adult CACH syndrome"/>
</dbReference>
<dbReference type="Orphanet" id="157716">
    <property type="disease" value="Late infantile CACH syndrome"/>
</dbReference>
<dbReference type="Orphanet" id="99853">
    <property type="disease" value="Ovarioleukodystrophy"/>
</dbReference>
<dbReference type="PharmGKB" id="PA27691"/>
<dbReference type="VEuPathDB" id="HostDB:ENSG00000115211"/>
<dbReference type="eggNOG" id="KOG1467">
    <property type="taxonomic scope" value="Eukaryota"/>
</dbReference>
<dbReference type="GeneTree" id="ENSGT00550000075009"/>
<dbReference type="HOGENOM" id="CLU_016218_3_3_1"/>
<dbReference type="InParanoid" id="Q9UI10"/>
<dbReference type="OMA" id="MRDYVIC"/>
<dbReference type="OrthoDB" id="10254737at2759"/>
<dbReference type="PAN-GO" id="Q9UI10">
    <property type="GO annotations" value="0 GO annotations based on evolutionary models"/>
</dbReference>
<dbReference type="PhylomeDB" id="Q9UI10"/>
<dbReference type="TreeFam" id="TF101508"/>
<dbReference type="PathwayCommons" id="Q9UI10"/>
<dbReference type="Reactome" id="R-HSA-72731">
    <property type="pathway name" value="Recycling of eIF2:GDP"/>
</dbReference>
<dbReference type="SignaLink" id="Q9UI10"/>
<dbReference type="SIGNOR" id="Q9UI10"/>
<dbReference type="BioGRID-ORCS" id="8890">
    <property type="hits" value="830 hits in 1169 CRISPR screens"/>
</dbReference>
<dbReference type="CD-CODE" id="91857CE7">
    <property type="entry name" value="Nucleolus"/>
</dbReference>
<dbReference type="ChiTaRS" id="EIF2B4">
    <property type="organism name" value="human"/>
</dbReference>
<dbReference type="GeneWiki" id="EIF2B4"/>
<dbReference type="GenomeRNAi" id="8890"/>
<dbReference type="Pharos" id="Q9UI10">
    <property type="development level" value="Tbio"/>
</dbReference>
<dbReference type="PRO" id="PR:Q9UI10"/>
<dbReference type="Proteomes" id="UP000005640">
    <property type="component" value="Chromosome 2"/>
</dbReference>
<dbReference type="RNAct" id="Q9UI10">
    <property type="molecule type" value="protein"/>
</dbReference>
<dbReference type="Bgee" id="ENSG00000115211">
    <property type="expression patterns" value="Expressed in lower esophagus mucosa and 203 other cell types or tissues"/>
</dbReference>
<dbReference type="ExpressionAtlas" id="Q9UI10">
    <property type="expression patterns" value="baseline and differential"/>
</dbReference>
<dbReference type="GO" id="GO:0005737">
    <property type="term" value="C:cytoplasm"/>
    <property type="evidence" value="ECO:0000314"/>
    <property type="project" value="UniProtKB"/>
</dbReference>
<dbReference type="GO" id="GO:0005829">
    <property type="term" value="C:cytosol"/>
    <property type="evidence" value="ECO:0000304"/>
    <property type="project" value="Reactome"/>
</dbReference>
<dbReference type="GO" id="GO:0005851">
    <property type="term" value="C:eukaryotic translation initiation factor 2B complex"/>
    <property type="evidence" value="ECO:0000314"/>
    <property type="project" value="UniProtKB"/>
</dbReference>
<dbReference type="GO" id="GO:0005085">
    <property type="term" value="F:guanyl-nucleotide exchange factor activity"/>
    <property type="evidence" value="ECO:0000314"/>
    <property type="project" value="UniProtKB"/>
</dbReference>
<dbReference type="GO" id="GO:0003743">
    <property type="term" value="F:translation initiation factor activity"/>
    <property type="evidence" value="ECO:0007669"/>
    <property type="project" value="UniProtKB-KW"/>
</dbReference>
<dbReference type="GO" id="GO:0031369">
    <property type="term" value="F:translation initiation factor binding"/>
    <property type="evidence" value="ECO:0000250"/>
    <property type="project" value="UniProtKB"/>
</dbReference>
<dbReference type="GO" id="GO:0002183">
    <property type="term" value="P:cytoplasmic translational initiation"/>
    <property type="evidence" value="ECO:0000314"/>
    <property type="project" value="UniProtKB"/>
</dbReference>
<dbReference type="GO" id="GO:0042552">
    <property type="term" value="P:myelination"/>
    <property type="evidence" value="ECO:0000315"/>
    <property type="project" value="UniProtKB"/>
</dbReference>
<dbReference type="GO" id="GO:0014003">
    <property type="term" value="P:oligodendrocyte development"/>
    <property type="evidence" value="ECO:0000315"/>
    <property type="project" value="UniProtKB"/>
</dbReference>
<dbReference type="GO" id="GO:0001541">
    <property type="term" value="P:ovarian follicle development"/>
    <property type="evidence" value="ECO:0000315"/>
    <property type="project" value="UniProtKB"/>
</dbReference>
<dbReference type="GO" id="GO:0006417">
    <property type="term" value="P:regulation of translation"/>
    <property type="evidence" value="ECO:0000303"/>
    <property type="project" value="UniProtKB"/>
</dbReference>
<dbReference type="GO" id="GO:0009749">
    <property type="term" value="P:response to glucose"/>
    <property type="evidence" value="ECO:0000250"/>
    <property type="project" value="UniProtKB"/>
</dbReference>
<dbReference type="GO" id="GO:0009408">
    <property type="term" value="P:response to heat"/>
    <property type="evidence" value="ECO:0000250"/>
    <property type="project" value="UniProtKB"/>
</dbReference>
<dbReference type="GO" id="GO:0043434">
    <property type="term" value="P:response to peptide hormone"/>
    <property type="evidence" value="ECO:0000250"/>
    <property type="project" value="UniProtKB"/>
</dbReference>
<dbReference type="GO" id="GO:0050852">
    <property type="term" value="P:T cell receptor signaling pathway"/>
    <property type="evidence" value="ECO:0000314"/>
    <property type="project" value="UniProtKB"/>
</dbReference>
<dbReference type="GO" id="GO:0006413">
    <property type="term" value="P:translational initiation"/>
    <property type="evidence" value="ECO:0000314"/>
    <property type="project" value="UniProtKB"/>
</dbReference>
<dbReference type="FunFam" id="3.40.50.10470:FF:000002">
    <property type="entry name" value="Probable translation initiation factor eIF-2B subunit delta"/>
    <property type="match status" value="1"/>
</dbReference>
<dbReference type="Gene3D" id="3.40.50.10470">
    <property type="entry name" value="Translation initiation factor eif-2b, domain 2"/>
    <property type="match status" value="1"/>
</dbReference>
<dbReference type="InterPro" id="IPR000649">
    <property type="entry name" value="IF-2B-related"/>
</dbReference>
<dbReference type="InterPro" id="IPR042529">
    <property type="entry name" value="IF_2B-like_C"/>
</dbReference>
<dbReference type="InterPro" id="IPR037171">
    <property type="entry name" value="NagB/RpiA_transferase-like"/>
</dbReference>
<dbReference type="PANTHER" id="PTHR10233">
    <property type="entry name" value="TRANSLATION INITIATION FACTOR EIF-2B"/>
    <property type="match status" value="1"/>
</dbReference>
<dbReference type="PANTHER" id="PTHR10233:SF14">
    <property type="entry name" value="TRANSLATION INITIATION FACTOR EIF-2B SUBUNIT DELTA"/>
    <property type="match status" value="1"/>
</dbReference>
<dbReference type="Pfam" id="PF01008">
    <property type="entry name" value="IF-2B"/>
    <property type="match status" value="1"/>
</dbReference>
<dbReference type="SUPFAM" id="SSF100950">
    <property type="entry name" value="NagB/RpiA/CoA transferase-like"/>
    <property type="match status" value="1"/>
</dbReference>
<name>EI2BD_HUMAN</name>
<keyword id="KW-0002">3D-structure</keyword>
<keyword id="KW-0007">Acetylation</keyword>
<keyword id="KW-0025">Alternative splicing</keyword>
<keyword id="KW-0963">Cytoplasm</keyword>
<keyword id="KW-0225">Disease variant</keyword>
<keyword id="KW-0396">Initiation factor</keyword>
<keyword id="KW-1026">Leukodystrophy</keyword>
<keyword id="KW-0597">Phosphoprotein</keyword>
<keyword id="KW-0648">Protein biosynthesis</keyword>
<keyword id="KW-1267">Proteomics identification</keyword>
<keyword id="KW-1185">Reference proteome</keyword>
<sequence length="523" mass="57557">MAAVAVAVREDSGSGMKAELPPGPGAVGREMTKEEKLQLRKEKKQQKKKRKEEKGAEPETGSAVSAAQCQVGPTRELPESGIQLGTPREKVPAGRSKAELRAERRAKQEAERALKQARKGEQGGPPPKASPSTAGETPSGVKRLPEYPQVDDLLLRRLVKKPERQQVPTRKDYGSKVSLFSHLPQYSRQNSLTQFMSIPSSVIHPAMVRLGLQYSQGLVSGSNARCIALLRALQQVIQDYTTPPNEELSRDLVNKLKPYMSFLTQCRPLSASMHNAIKFLNKEITSVGSSKREEEAKSELRAAIDRYVQEKIVLAAQAISRFAYQKISNGDVILVYGCSSLVSRILQEAWTEGRRFRVVVVDSRPWLEGRHTLRSLVHAGVPASYLLIPAASYVLPEVSKVLLGAHALLANGSVMSRVGTAQLALVARAHNVPVLVCCETYKFCERVQTDAFVSNELDDPDDLQCKRGEHVALANWQNHASLRLLNLVYDVTPPELVDLVITELGMIPCSSVPVVLRVKSSDQ</sequence>
<feature type="initiator methionine" description="Removed" evidence="17">
    <location>
        <position position="1"/>
    </location>
</feature>
<feature type="chain" id="PRO_0000156067" description="Translation initiation factor eIF2B subunit delta">
    <location>
        <begin position="2"/>
        <end position="523"/>
    </location>
</feature>
<feature type="region of interest" description="Disordered" evidence="2">
    <location>
        <begin position="1"/>
        <end position="147"/>
    </location>
</feature>
<feature type="region of interest" description="May bind the chemical integrated stress response (ISR) inhibitor ISRIB" evidence="11">
    <location>
        <begin position="170"/>
        <end position="179"/>
    </location>
</feature>
<feature type="compositionally biased region" description="Basic and acidic residues" evidence="2">
    <location>
        <begin position="30"/>
        <end position="40"/>
    </location>
</feature>
<feature type="compositionally biased region" description="Basic residues" evidence="2">
    <location>
        <begin position="41"/>
        <end position="51"/>
    </location>
</feature>
<feature type="compositionally biased region" description="Basic and acidic residues" evidence="2">
    <location>
        <begin position="87"/>
        <end position="121"/>
    </location>
</feature>
<feature type="modified residue" description="N-acetylalanine" evidence="17">
    <location>
        <position position="2"/>
    </location>
</feature>
<feature type="modified residue" description="Phosphoserine" evidence="18">
    <location>
        <position position="12"/>
    </location>
</feature>
<feature type="modified residue" description="Phosphothreonine" evidence="14 15 16 18">
    <location>
        <position position="86"/>
    </location>
</feature>
<feature type="modified residue" description="Phosphoserine" evidence="18">
    <location>
        <position position="130"/>
    </location>
</feature>
<feature type="splice variant" id="VSP_001433" description="In isoform 2." evidence="9">
    <original>MAAVAVAVRE</original>
    <variation>MPTQQPAAPSTRAPKPSRSLSGSLCALFSDA</variation>
    <location>
        <begin position="1"/>
        <end position="10"/>
    </location>
</feature>
<feature type="splice variant" id="VSP_040130" description="In isoform 2 and isoform 3." evidence="9">
    <location>
        <position position="71"/>
    </location>
</feature>
<feature type="sequence variant" id="VAR_048918" description="In dbSNP:rs34155621.">
    <original>A</original>
    <variation>V</variation>
    <location>
        <position position="93"/>
    </location>
</feature>
<feature type="sequence variant" id="VAR_068455" description="In VWM4; dbSNP:rs113994028." evidence="5">
    <original>R</original>
    <variation>Q</variation>
    <location>
        <position position="209"/>
    </location>
</feature>
<feature type="sequence variant" id="VAR_015405" description="In VWM4; dbSNP:rs113994027." evidence="3">
    <original>A</original>
    <variation>V</variation>
    <location>
        <position position="228"/>
    </location>
</feature>
<feature type="sequence variant" id="VAR_068456" description="In VWM4; dbSNP:rs113994031." evidence="5">
    <original>L</original>
    <variation>R</variation>
    <location>
        <position position="269"/>
    </location>
</feature>
<feature type="sequence variant" id="VAR_015406" description="In dbSNP:rs78599355." evidence="3">
    <original>R</original>
    <variation>G</variation>
    <location>
        <position position="306"/>
    </location>
</feature>
<feature type="sequence variant" id="VAR_015407" description="In VWM4; dbSNP:rs113994033." evidence="3">
    <original>R</original>
    <variation>Q</variation>
    <location>
        <position position="357"/>
    </location>
</feature>
<feature type="sequence variant" id="VAR_015408" description="In VWM4; dbSNP:rs113994035." evidence="3 5">
    <original>R</original>
    <variation>C</variation>
    <location>
        <position position="374"/>
    </location>
</feature>
<feature type="sequence variant" id="VAR_016843" description="In VWM4; with ovarian failure; dbSNP:rs113994038." evidence="4">
    <original>C</original>
    <variation>R</variation>
    <location>
        <position position="465"/>
    </location>
</feature>
<feature type="sequence variant" id="VAR_016844" description="In VWM4; with ovarian failure; dbSNP:rs113994040." evidence="4">
    <original>Y</original>
    <variation>H</variation>
    <location>
        <position position="489"/>
    </location>
</feature>
<feature type="sequence conflict" description="In Ref. 2; CAB57260/CAB57261/CAB57304/CAB57305." evidence="10" ref="2">
    <original>S</original>
    <variation>T</variation>
    <location>
        <position position="197"/>
    </location>
</feature>
<feature type="sequence conflict" description="In Ref. 1; AAF17195." evidence="10" ref="1">
    <original>A</original>
    <variation>S</variation>
    <location>
        <position position="323"/>
    </location>
</feature>
<feature type="sequence conflict" description="In Ref. 1; AAF17195." evidence="10" ref="1">
    <original>S</original>
    <variation>L</variation>
    <location>
        <position position="481"/>
    </location>
</feature>
<feature type="helix" evidence="22">
    <location>
        <begin position="178"/>
        <end position="180"/>
    </location>
</feature>
<feature type="strand" evidence="19">
    <location>
        <begin position="181"/>
        <end position="183"/>
    </location>
</feature>
<feature type="strand" evidence="19">
    <location>
        <begin position="188"/>
        <end position="190"/>
    </location>
</feature>
<feature type="helix" evidence="22">
    <location>
        <begin position="192"/>
        <end position="195"/>
    </location>
</feature>
<feature type="strand" evidence="22">
    <location>
        <begin position="201"/>
        <end position="203"/>
    </location>
</feature>
<feature type="helix" evidence="22">
    <location>
        <begin position="205"/>
        <end position="215"/>
    </location>
</feature>
<feature type="helix" evidence="22">
    <location>
        <begin position="222"/>
        <end position="239"/>
    </location>
</feature>
<feature type="strand" evidence="20">
    <location>
        <begin position="244"/>
        <end position="246"/>
    </location>
</feature>
<feature type="helix" evidence="22">
    <location>
        <begin position="248"/>
        <end position="266"/>
    </location>
</feature>
<feature type="helix" evidence="22">
    <location>
        <begin position="271"/>
        <end position="285"/>
    </location>
</feature>
<feature type="strand" evidence="21">
    <location>
        <begin position="289"/>
        <end position="291"/>
    </location>
</feature>
<feature type="helix" evidence="22">
    <location>
        <begin position="293"/>
        <end position="324"/>
    </location>
</feature>
<feature type="strand" evidence="22">
    <location>
        <begin position="332"/>
        <end position="337"/>
    </location>
</feature>
<feature type="helix" evidence="22">
    <location>
        <begin position="340"/>
        <end position="351"/>
    </location>
</feature>
<feature type="strand" evidence="22">
    <location>
        <begin position="357"/>
        <end position="362"/>
    </location>
</feature>
<feature type="turn" evidence="22">
    <location>
        <begin position="364"/>
        <end position="366"/>
    </location>
</feature>
<feature type="helix" evidence="22">
    <location>
        <begin position="369"/>
        <end position="378"/>
    </location>
</feature>
<feature type="strand" evidence="22">
    <location>
        <begin position="383"/>
        <end position="387"/>
    </location>
</feature>
<feature type="helix" evidence="22">
    <location>
        <begin position="388"/>
        <end position="390"/>
    </location>
</feature>
<feature type="helix" evidence="22">
    <location>
        <begin position="391"/>
        <end position="394"/>
    </location>
</feature>
<feature type="helix" evidence="22">
    <location>
        <begin position="395"/>
        <end position="397"/>
    </location>
</feature>
<feature type="strand" evidence="22">
    <location>
        <begin position="400"/>
        <end position="404"/>
    </location>
</feature>
<feature type="strand" evidence="22">
    <location>
        <begin position="406"/>
        <end position="408"/>
    </location>
</feature>
<feature type="strand" evidence="19">
    <location>
        <begin position="410"/>
        <end position="412"/>
    </location>
</feature>
<feature type="strand" evidence="22">
    <location>
        <begin position="414"/>
        <end position="417"/>
    </location>
</feature>
<feature type="helix" evidence="22">
    <location>
        <begin position="420"/>
        <end position="429"/>
    </location>
</feature>
<feature type="strand" evidence="22">
    <location>
        <begin position="434"/>
        <end position="437"/>
    </location>
</feature>
<feature type="helix" evidence="22">
    <location>
        <begin position="440"/>
        <end position="442"/>
    </location>
</feature>
<feature type="strand" evidence="22">
    <location>
        <begin position="449"/>
        <end position="454"/>
    </location>
</feature>
<feature type="helix" evidence="22">
    <location>
        <begin position="460"/>
        <end position="463"/>
    </location>
</feature>
<feature type="strand" evidence="19">
    <location>
        <begin position="467"/>
        <end position="469"/>
    </location>
</feature>
<feature type="turn" evidence="22">
    <location>
        <begin position="472"/>
        <end position="475"/>
    </location>
</feature>
<feature type="helix" evidence="22">
    <location>
        <begin position="476"/>
        <end position="478"/>
    </location>
</feature>
<feature type="strand" evidence="22">
    <location>
        <begin position="482"/>
        <end position="484"/>
    </location>
</feature>
<feature type="strand" evidence="22">
    <location>
        <begin position="489"/>
        <end position="492"/>
    </location>
</feature>
<feature type="helix" evidence="22">
    <location>
        <begin position="494"/>
        <end position="496"/>
    </location>
</feature>
<feature type="strand" evidence="22">
    <location>
        <begin position="499"/>
        <end position="502"/>
    </location>
</feature>
<feature type="strand" evidence="22">
    <location>
        <begin position="505"/>
        <end position="507"/>
    </location>
</feature>
<feature type="helix" evidence="22">
    <location>
        <begin position="509"/>
        <end position="511"/>
    </location>
</feature>
<feature type="helix" evidence="22">
    <location>
        <begin position="512"/>
        <end position="520"/>
    </location>
</feature>
<accession>Q9UI10</accession>
<accession>Q53RY7</accession>
<accession>Q5BJF4</accession>
<accession>Q9BUV9</accession>
<accession>Q9UBG4</accession>
<accession>Q9UIQ9</accession>
<accession>Q9UJ95</accession>
<reference key="1">
    <citation type="journal article" date="2000" name="Proc. Natl. Acad. Sci. U.S.A.">
        <title>Gene expression profiling in the human hypothalamus-pituitary-adrenal axis and full-length cDNA cloning.</title>
        <authorList>
            <person name="Hu R.-M."/>
            <person name="Han Z.-G."/>
            <person name="Song H.-D."/>
            <person name="Peng Y.-D."/>
            <person name="Huang Q.-H."/>
            <person name="Ren S.-X."/>
            <person name="Gu Y.-J."/>
            <person name="Huang C.-H."/>
            <person name="Li Y.-B."/>
            <person name="Jiang C.-L."/>
            <person name="Fu G."/>
            <person name="Zhang Q.-H."/>
            <person name="Gu B.-W."/>
            <person name="Dai M."/>
            <person name="Mao Y.-F."/>
            <person name="Gao G.-F."/>
            <person name="Rong R."/>
            <person name="Ye M."/>
            <person name="Zhou J."/>
            <person name="Xu S.-H."/>
            <person name="Gu J."/>
            <person name="Shi J.-X."/>
            <person name="Jin W.-R."/>
            <person name="Zhang C.-K."/>
            <person name="Wu T.-M."/>
            <person name="Huang G.-Y."/>
            <person name="Chen Z."/>
            <person name="Chen M.-D."/>
            <person name="Chen J.-L."/>
        </authorList>
    </citation>
    <scope>NUCLEOTIDE SEQUENCE [LARGE SCALE MRNA] (ISOFORM 1)</scope>
    <source>
        <tissue>Adrenal gland</tissue>
    </source>
</reference>
<reference key="2">
    <citation type="submission" date="1998-09" db="EMBL/GenBank/DDBJ databases">
        <title>cDNA cloning, genomic organization and chromosomal localization of the human eIF2B delta subunit.</title>
        <authorList>
            <person name="Wightman P.J."/>
            <person name="Bonthron D.T."/>
        </authorList>
    </citation>
    <scope>NUCLEOTIDE SEQUENCE [GENOMIC DNA / MRNA] (ISOFORMS 1; 2 AND 3)</scope>
</reference>
<reference key="3">
    <citation type="journal article" date="2005" name="Nature">
        <title>Generation and annotation of the DNA sequences of human chromosomes 2 and 4.</title>
        <authorList>
            <person name="Hillier L.W."/>
            <person name="Graves T.A."/>
            <person name="Fulton R.S."/>
            <person name="Fulton L.A."/>
            <person name="Pepin K.H."/>
            <person name="Minx P."/>
            <person name="Wagner-McPherson C."/>
            <person name="Layman D."/>
            <person name="Wylie K."/>
            <person name="Sekhon M."/>
            <person name="Becker M.C."/>
            <person name="Fewell G.A."/>
            <person name="Delehaunty K.D."/>
            <person name="Miner T.L."/>
            <person name="Nash W.E."/>
            <person name="Kremitzki C."/>
            <person name="Oddy L."/>
            <person name="Du H."/>
            <person name="Sun H."/>
            <person name="Bradshaw-Cordum H."/>
            <person name="Ali J."/>
            <person name="Carter J."/>
            <person name="Cordes M."/>
            <person name="Harris A."/>
            <person name="Isak A."/>
            <person name="van Brunt A."/>
            <person name="Nguyen C."/>
            <person name="Du F."/>
            <person name="Courtney L."/>
            <person name="Kalicki J."/>
            <person name="Ozersky P."/>
            <person name="Abbott S."/>
            <person name="Armstrong J."/>
            <person name="Belter E.A."/>
            <person name="Caruso L."/>
            <person name="Cedroni M."/>
            <person name="Cotton M."/>
            <person name="Davidson T."/>
            <person name="Desai A."/>
            <person name="Elliott G."/>
            <person name="Erb T."/>
            <person name="Fronick C."/>
            <person name="Gaige T."/>
            <person name="Haakenson W."/>
            <person name="Haglund K."/>
            <person name="Holmes A."/>
            <person name="Harkins R."/>
            <person name="Kim K."/>
            <person name="Kruchowski S.S."/>
            <person name="Strong C.M."/>
            <person name="Grewal N."/>
            <person name="Goyea E."/>
            <person name="Hou S."/>
            <person name="Levy A."/>
            <person name="Martinka S."/>
            <person name="Mead K."/>
            <person name="McLellan M.D."/>
            <person name="Meyer R."/>
            <person name="Randall-Maher J."/>
            <person name="Tomlinson C."/>
            <person name="Dauphin-Kohlberg S."/>
            <person name="Kozlowicz-Reilly A."/>
            <person name="Shah N."/>
            <person name="Swearengen-Shahid S."/>
            <person name="Snider J."/>
            <person name="Strong J.T."/>
            <person name="Thompson J."/>
            <person name="Yoakum M."/>
            <person name="Leonard S."/>
            <person name="Pearman C."/>
            <person name="Trani L."/>
            <person name="Radionenko M."/>
            <person name="Waligorski J.E."/>
            <person name="Wang C."/>
            <person name="Rock S.M."/>
            <person name="Tin-Wollam A.-M."/>
            <person name="Maupin R."/>
            <person name="Latreille P."/>
            <person name="Wendl M.C."/>
            <person name="Yang S.-P."/>
            <person name="Pohl C."/>
            <person name="Wallis J.W."/>
            <person name="Spieth J."/>
            <person name="Bieri T.A."/>
            <person name="Berkowicz N."/>
            <person name="Nelson J.O."/>
            <person name="Osborne J."/>
            <person name="Ding L."/>
            <person name="Meyer R."/>
            <person name="Sabo A."/>
            <person name="Shotland Y."/>
            <person name="Sinha P."/>
            <person name="Wohldmann P.E."/>
            <person name="Cook L.L."/>
            <person name="Hickenbotham M.T."/>
            <person name="Eldred J."/>
            <person name="Williams D."/>
            <person name="Jones T.A."/>
            <person name="She X."/>
            <person name="Ciccarelli F.D."/>
            <person name="Izaurralde E."/>
            <person name="Taylor J."/>
            <person name="Schmutz J."/>
            <person name="Myers R.M."/>
            <person name="Cox D.R."/>
            <person name="Huang X."/>
            <person name="McPherson J.D."/>
            <person name="Mardis E.R."/>
            <person name="Clifton S.W."/>
            <person name="Warren W.C."/>
            <person name="Chinwalla A.T."/>
            <person name="Eddy S.R."/>
            <person name="Marra M.A."/>
            <person name="Ovcharenko I."/>
            <person name="Furey T.S."/>
            <person name="Miller W."/>
            <person name="Eichler E.E."/>
            <person name="Bork P."/>
            <person name="Suyama M."/>
            <person name="Torrents D."/>
            <person name="Waterston R.H."/>
            <person name="Wilson R.K."/>
        </authorList>
    </citation>
    <scope>NUCLEOTIDE SEQUENCE [LARGE SCALE GENOMIC DNA]</scope>
</reference>
<reference key="4">
    <citation type="submission" date="2005-09" db="EMBL/GenBank/DDBJ databases">
        <authorList>
            <person name="Mural R.J."/>
            <person name="Istrail S."/>
            <person name="Sutton G.G."/>
            <person name="Florea L."/>
            <person name="Halpern A.L."/>
            <person name="Mobarry C.M."/>
            <person name="Lippert R."/>
            <person name="Walenz B."/>
            <person name="Shatkay H."/>
            <person name="Dew I."/>
            <person name="Miller J.R."/>
            <person name="Flanigan M.J."/>
            <person name="Edwards N.J."/>
            <person name="Bolanos R."/>
            <person name="Fasulo D."/>
            <person name="Halldorsson B.V."/>
            <person name="Hannenhalli S."/>
            <person name="Turner R."/>
            <person name="Yooseph S."/>
            <person name="Lu F."/>
            <person name="Nusskern D.R."/>
            <person name="Shue B.C."/>
            <person name="Zheng X.H."/>
            <person name="Zhong F."/>
            <person name="Delcher A.L."/>
            <person name="Huson D.H."/>
            <person name="Kravitz S.A."/>
            <person name="Mouchard L."/>
            <person name="Reinert K."/>
            <person name="Remington K.A."/>
            <person name="Clark A.G."/>
            <person name="Waterman M.S."/>
            <person name="Eichler E.E."/>
            <person name="Adams M.D."/>
            <person name="Hunkapiller M.W."/>
            <person name="Myers E.W."/>
            <person name="Venter J.C."/>
        </authorList>
    </citation>
    <scope>NUCLEOTIDE SEQUENCE [LARGE SCALE GENOMIC DNA]</scope>
</reference>
<reference key="5">
    <citation type="journal article" date="2004" name="Genome Res.">
        <title>The status, quality, and expansion of the NIH full-length cDNA project: the Mammalian Gene Collection (MGC).</title>
        <authorList>
            <consortium name="The MGC Project Team"/>
        </authorList>
    </citation>
    <scope>NUCLEOTIDE SEQUENCE [LARGE SCALE MRNA] (ISOFORM 1)</scope>
    <source>
        <tissue>Lung</tissue>
        <tissue>Testis</tissue>
    </source>
</reference>
<reference key="6">
    <citation type="journal article" date="2008" name="Mol. Cell">
        <title>Kinase-selective enrichment enables quantitative phosphoproteomics of the kinome across the cell cycle.</title>
        <authorList>
            <person name="Daub H."/>
            <person name="Olsen J.V."/>
            <person name="Bairlein M."/>
            <person name="Gnad F."/>
            <person name="Oppermann F.S."/>
            <person name="Korner R."/>
            <person name="Greff Z."/>
            <person name="Keri G."/>
            <person name="Stemmann O."/>
            <person name="Mann M."/>
        </authorList>
    </citation>
    <scope>IDENTIFICATION BY MASS SPECTROMETRY [LARGE SCALE ANALYSIS]</scope>
    <source>
        <tissue>Cervix carcinoma</tissue>
    </source>
</reference>
<reference key="7">
    <citation type="journal article" date="2008" name="Proc. Natl. Acad. Sci. U.S.A.">
        <title>A quantitative atlas of mitotic phosphorylation.</title>
        <authorList>
            <person name="Dephoure N."/>
            <person name="Zhou C."/>
            <person name="Villen J."/>
            <person name="Beausoleil S.A."/>
            <person name="Bakalarski C.E."/>
            <person name="Elledge S.J."/>
            <person name="Gygi S.P."/>
        </authorList>
    </citation>
    <scope>PHOSPHORYLATION [LARGE SCALE ANALYSIS] AT THR-86</scope>
    <scope>IDENTIFICATION BY MASS SPECTROMETRY [LARGE SCALE ANALYSIS]</scope>
    <source>
        <tissue>Cervix carcinoma</tissue>
    </source>
</reference>
<reference key="8">
    <citation type="journal article" date="2009" name="Anal. Chem.">
        <title>Lys-N and trypsin cover complementary parts of the phosphoproteome in a refined SCX-based approach.</title>
        <authorList>
            <person name="Gauci S."/>
            <person name="Helbig A.O."/>
            <person name="Slijper M."/>
            <person name="Krijgsveld J."/>
            <person name="Heck A.J."/>
            <person name="Mohammed S."/>
        </authorList>
    </citation>
    <scope>IDENTIFICATION BY MASS SPECTROMETRY [LARGE SCALE ANALYSIS]</scope>
</reference>
<reference key="9">
    <citation type="journal article" date="2009" name="Sci. Signal.">
        <title>Quantitative phosphoproteomic analysis of T cell receptor signaling reveals system-wide modulation of protein-protein interactions.</title>
        <authorList>
            <person name="Mayya V."/>
            <person name="Lundgren D.H."/>
            <person name="Hwang S.-I."/>
            <person name="Rezaul K."/>
            <person name="Wu L."/>
            <person name="Eng J.K."/>
            <person name="Rodionov V."/>
            <person name="Han D.K."/>
        </authorList>
    </citation>
    <scope>PHOSPHORYLATION [LARGE SCALE ANALYSIS] AT THR-86</scope>
    <scope>IDENTIFICATION BY MASS SPECTROMETRY [LARGE SCALE ANALYSIS]</scope>
    <source>
        <tissue>Leukemic T-cell</tissue>
    </source>
</reference>
<reference key="10">
    <citation type="journal article" date="2010" name="Sci. Signal.">
        <title>Quantitative phosphoproteomics reveals widespread full phosphorylation site occupancy during mitosis.</title>
        <authorList>
            <person name="Olsen J.V."/>
            <person name="Vermeulen M."/>
            <person name="Santamaria A."/>
            <person name="Kumar C."/>
            <person name="Miller M.L."/>
            <person name="Jensen L.J."/>
            <person name="Gnad F."/>
            <person name="Cox J."/>
            <person name="Jensen T.S."/>
            <person name="Nigg E.A."/>
            <person name="Brunak S."/>
            <person name="Mann M."/>
        </authorList>
    </citation>
    <scope>PHOSPHORYLATION [LARGE SCALE ANALYSIS] AT THR-86</scope>
    <scope>IDENTIFICATION BY MASS SPECTROMETRY [LARGE SCALE ANALYSIS]</scope>
    <source>
        <tissue>Cervix carcinoma</tissue>
    </source>
</reference>
<reference key="11">
    <citation type="journal article" date="2011" name="BMC Syst. Biol.">
        <title>Initial characterization of the human central proteome.</title>
        <authorList>
            <person name="Burkard T.R."/>
            <person name="Planyavsky M."/>
            <person name="Kaupe I."/>
            <person name="Breitwieser F.P."/>
            <person name="Buerckstuemmer T."/>
            <person name="Bennett K.L."/>
            <person name="Superti-Furga G."/>
            <person name="Colinge J."/>
        </authorList>
    </citation>
    <scope>IDENTIFICATION BY MASS SPECTROMETRY [LARGE SCALE ANALYSIS]</scope>
</reference>
<reference key="12">
    <citation type="journal article" date="2012" name="Proc. Natl. Acad. Sci. U.S.A.">
        <title>N-terminal acetylome analyses and functional insights of the N-terminal acetyltransferase NatB.</title>
        <authorList>
            <person name="Van Damme P."/>
            <person name="Lasa M."/>
            <person name="Polevoda B."/>
            <person name="Gazquez C."/>
            <person name="Elosegui-Artola A."/>
            <person name="Kim D.S."/>
            <person name="De Juan-Pardo E."/>
            <person name="Demeyer K."/>
            <person name="Hole K."/>
            <person name="Larrea E."/>
            <person name="Timmerman E."/>
            <person name="Prieto J."/>
            <person name="Arnesen T."/>
            <person name="Sherman F."/>
            <person name="Gevaert K."/>
            <person name="Aldabe R."/>
        </authorList>
    </citation>
    <scope>ACETYLATION [LARGE SCALE ANALYSIS] AT ALA-2</scope>
    <scope>CLEAVAGE OF INITIATOR METHIONINE [LARGE SCALE ANALYSIS]</scope>
    <scope>IDENTIFICATION BY MASS SPECTROMETRY [LARGE SCALE ANALYSIS]</scope>
</reference>
<reference key="13">
    <citation type="journal article" date="2013" name="J. Proteome Res.">
        <title>Toward a comprehensive characterization of a human cancer cell phosphoproteome.</title>
        <authorList>
            <person name="Zhou H."/>
            <person name="Di Palma S."/>
            <person name="Preisinger C."/>
            <person name="Peng M."/>
            <person name="Polat A.N."/>
            <person name="Heck A.J."/>
            <person name="Mohammed S."/>
        </authorList>
    </citation>
    <scope>PHOSPHORYLATION [LARGE SCALE ANALYSIS] AT SER-12; THR-86 AND SER-130</scope>
    <scope>IDENTIFICATION BY MASS SPECTROMETRY [LARGE SCALE ANALYSIS]</scope>
    <source>
        <tissue>Cervix carcinoma</tissue>
        <tissue>Erythroleukemia</tissue>
    </source>
</reference>
<reference key="14">
    <citation type="journal article" date="2014" name="J. Proteomics">
        <title>An enzyme assisted RP-RPLC approach for in-depth analysis of human liver phosphoproteome.</title>
        <authorList>
            <person name="Bian Y."/>
            <person name="Song C."/>
            <person name="Cheng K."/>
            <person name="Dong M."/>
            <person name="Wang F."/>
            <person name="Huang J."/>
            <person name="Sun D."/>
            <person name="Wang L."/>
            <person name="Ye M."/>
            <person name="Zou H."/>
        </authorList>
    </citation>
    <scope>IDENTIFICATION BY MASS SPECTROMETRY [LARGE SCALE ANALYSIS]</scope>
    <source>
        <tissue>Liver</tissue>
    </source>
</reference>
<reference key="15">
    <citation type="journal article" date="2017" name="Nat. Commun.">
        <title>Comparative influenza protein interactomes identify the role of plakophilin 2 in virus restriction.</title>
        <authorList>
            <person name="Wang L."/>
            <person name="Fu B."/>
            <person name="Li W."/>
            <person name="Patil G."/>
            <person name="Liu L."/>
            <person name="Dorf M.E."/>
            <person name="Li S."/>
        </authorList>
    </citation>
    <scope>FUNCTION (MICROBIAL INFECTION)</scope>
</reference>
<reference key="16">
    <citation type="journal article" date="2015" name="Science">
        <title>Stress responses. Mutations in a translation initiation factor identify the target of a memory-enhancing compound.</title>
        <authorList>
            <person name="Sekine Y."/>
            <person name="Zyryanova A."/>
            <person name="Crespillo-Casado A."/>
            <person name="Fischer P.M."/>
            <person name="Harding H.P."/>
            <person name="Ron D."/>
        </authorList>
    </citation>
    <scope>FUNCTION</scope>
    <scope>ACTIVITY REGULATION</scope>
    <scope>IDENTIFICATION BY MASS SPECTROMETRY</scope>
    <scope>IDENTIFICATION IN THE EIF2B COMPLEX</scope>
</reference>
<reference key="17">
    <citation type="journal article" date="2016" name="J. Struct. Funct. Genomics">
        <title>Expression, purification, and crystallization of Schizosaccharomyces pombe eIF2B.</title>
        <authorList>
            <person name="Kashiwagi K."/>
            <person name="Shigeta T."/>
            <person name="Imataka H."/>
            <person name="Ito T."/>
            <person name="Yokoyama S."/>
        </authorList>
    </citation>
    <scope>FUNCTION</scope>
    <scope>IDENTIFICATION IN THE EIF2B COMPLEX</scope>
</reference>
<reference evidence="12 13" key="18">
    <citation type="journal article" date="2019" name="Science">
        <title>Structural basis for eIF2B inhibition in integrated stress response.</title>
        <authorList>
            <person name="Kashiwagi K."/>
            <person name="Yokoyama T."/>
            <person name="Nishimoto M."/>
            <person name="Takahashi M."/>
            <person name="Sakamoto A."/>
            <person name="Yonemochi M."/>
            <person name="Shirouzu M."/>
            <person name="Ito T."/>
        </authorList>
    </citation>
    <scope>STRUCTURE BY ELECTRON MICROSCOPY (4.30 ANGSTROMS) IN COMPLEX WITH THE EIF2 COMPLEX</scope>
    <scope>FUNCTION</scope>
    <scope>SUBUNIT</scope>
    <scope>IDENTIFICATION IN THE EIF2B COMPLEX</scope>
</reference>
<reference key="19">
    <citation type="journal article" date="2002" name="Ann. Neurol.">
        <title>Mutations in each of the five subunits of translation initiation factor eIF2B can cause leukoencephalopathy with vanishing white matter.</title>
        <authorList>
            <person name="van der Knaap M.S."/>
            <person name="Leegwater P.A.J."/>
            <person name="Koenst A.A.M."/>
            <person name="Visser A."/>
            <person name="Naidu S."/>
            <person name="Oudejans C.B.M."/>
            <person name="Schutgens R.B.H."/>
            <person name="Pronk J.C."/>
        </authorList>
    </citation>
    <scope>VARIANTS VWM4 VAL-228; GLN-357 AND CYS-374</scope>
    <scope>VARIANT GLY-306</scope>
</reference>
<reference key="20">
    <citation type="journal article" date="2003" name="Am. J. Hum. Genet.">
        <title>Ovarian failure related to eukaryotic initiation factor 2B mutations.</title>
        <authorList>
            <person name="Fogli A."/>
            <person name="Rodriguez D."/>
            <person name="Eymard-Pierre E."/>
            <person name="Bouhour F."/>
            <person name="Labauge P."/>
            <person name="Meaney B.F."/>
            <person name="Zeesman S."/>
            <person name="Kaneski C.R."/>
            <person name="Schiffmann R."/>
            <person name="Boespflug-Tanguy O."/>
        </authorList>
    </citation>
    <scope>VARIANTS VWM4 ARG-465 AND HIS-489</scope>
</reference>
<reference key="21">
    <citation type="journal article" date="2005" name="Hum. Mutat.">
        <title>Identification of ten novel mutations in patients with eIF2B-related disorders.</title>
        <authorList>
            <person name="Ohlenbusch A."/>
            <person name="Henneke M."/>
            <person name="Brockmann K."/>
            <person name="Goerg M."/>
            <person name="Hanefeld F."/>
            <person name="Kohlschutter A."/>
            <person name="Gartner J."/>
        </authorList>
    </citation>
    <scope>VARIANTS VWM4 GLN-209; ARG-269 AND CYS-374</scope>
</reference>
<proteinExistence type="evidence at protein level"/>
<organism>
    <name type="scientific">Homo sapiens</name>
    <name type="common">Human</name>
    <dbReference type="NCBI Taxonomy" id="9606"/>
    <lineage>
        <taxon>Eukaryota</taxon>
        <taxon>Metazoa</taxon>
        <taxon>Chordata</taxon>
        <taxon>Craniata</taxon>
        <taxon>Vertebrata</taxon>
        <taxon>Euteleostomi</taxon>
        <taxon>Mammalia</taxon>
        <taxon>Eutheria</taxon>
        <taxon>Euarchontoglires</taxon>
        <taxon>Primates</taxon>
        <taxon>Haplorrhini</taxon>
        <taxon>Catarrhini</taxon>
        <taxon>Hominidae</taxon>
        <taxon>Homo</taxon>
    </lineage>
</organism>